<reference key="1">
    <citation type="journal article" date="2005" name="Nat. Genet.">
        <title>The complete genome sequence of Francisella tularensis, the causative agent of tularemia.</title>
        <authorList>
            <person name="Larsson P."/>
            <person name="Oyston P.C.F."/>
            <person name="Chain P."/>
            <person name="Chu M.C."/>
            <person name="Duffield M."/>
            <person name="Fuxelius H.-H."/>
            <person name="Garcia E."/>
            <person name="Haelltorp G."/>
            <person name="Johansson D."/>
            <person name="Isherwood K.E."/>
            <person name="Karp P.D."/>
            <person name="Larsson E."/>
            <person name="Liu Y."/>
            <person name="Michell S."/>
            <person name="Prior J."/>
            <person name="Prior R."/>
            <person name="Malfatti S."/>
            <person name="Sjoestedt A."/>
            <person name="Svensson K."/>
            <person name="Thompson N."/>
            <person name="Vergez L."/>
            <person name="Wagg J.K."/>
            <person name="Wren B.W."/>
            <person name="Lindler L.E."/>
            <person name="Andersson S.G.E."/>
            <person name="Forsman M."/>
            <person name="Titball R.W."/>
        </authorList>
    </citation>
    <scope>NUCLEOTIDE SEQUENCE [LARGE SCALE GENOMIC DNA]</scope>
    <source>
        <strain>SCHU S4 / Schu 4</strain>
    </source>
</reference>
<feature type="chain" id="PRO_0000094250" description="Elongation factor P">
    <location>
        <begin position="1"/>
        <end position="189"/>
    </location>
</feature>
<feature type="modified residue" description="N6-(3,6-diaminohexanoyl)-5-hydroxylysine" evidence="1">
    <location>
        <position position="34"/>
    </location>
</feature>
<comment type="function">
    <text evidence="1">Involved in peptide bond synthesis. Alleviates ribosome stalling that occurs when 3 or more consecutive Pro residues or the sequence PPG is present in a protein, possibly by augmenting the peptidyl transferase activity of the ribosome. Modification of Lys-34 is required for alleviation.</text>
</comment>
<comment type="pathway">
    <text evidence="1">Protein biosynthesis; polypeptide chain elongation.</text>
</comment>
<comment type="subcellular location">
    <subcellularLocation>
        <location evidence="1">Cytoplasm</location>
    </subcellularLocation>
</comment>
<comment type="PTM">
    <text evidence="1">May be beta-lysylated on the epsilon-amino group of Lys-34 by the combined action of EpmA and EpmB, and then hydroxylated on the C5 position of the same residue by EpmC (if this protein is present). Lysylation is critical for the stimulatory effect of EF-P on peptide-bond formation. The lysylation moiety may extend toward the peptidyltransferase center and stabilize the terminal 3-CCA end of the tRNA. Hydroxylation of the C5 position on Lys-34 may allow additional potential stabilizing hydrogen-bond interactions with the P-tRNA.</text>
</comment>
<comment type="similarity">
    <text evidence="1">Belongs to the elongation factor P family.</text>
</comment>
<dbReference type="EMBL" id="AJ749949">
    <property type="protein sequence ID" value="CAG44862.1"/>
    <property type="molecule type" value="Genomic_DNA"/>
</dbReference>
<dbReference type="RefSeq" id="WP_003014194.1">
    <property type="nucleotide sequence ID" value="NZ_CP010290.1"/>
</dbReference>
<dbReference type="RefSeq" id="YP_169282.1">
    <property type="nucleotide sequence ID" value="NC_006570.2"/>
</dbReference>
<dbReference type="SMR" id="Q5NI60"/>
<dbReference type="STRING" id="177416.FTT_0229c"/>
<dbReference type="DNASU" id="3191555"/>
<dbReference type="EnsemblBacteria" id="CAG44862">
    <property type="protein sequence ID" value="CAG44862"/>
    <property type="gene ID" value="FTT_0229c"/>
</dbReference>
<dbReference type="KEGG" id="ftu:FTT_0229c"/>
<dbReference type="eggNOG" id="COG0231">
    <property type="taxonomic scope" value="Bacteria"/>
</dbReference>
<dbReference type="OrthoDB" id="9801844at2"/>
<dbReference type="UniPathway" id="UPA00345"/>
<dbReference type="Proteomes" id="UP000001174">
    <property type="component" value="Chromosome"/>
</dbReference>
<dbReference type="GO" id="GO:0005737">
    <property type="term" value="C:cytoplasm"/>
    <property type="evidence" value="ECO:0007669"/>
    <property type="project" value="UniProtKB-SubCell"/>
</dbReference>
<dbReference type="GO" id="GO:0003746">
    <property type="term" value="F:translation elongation factor activity"/>
    <property type="evidence" value="ECO:0007669"/>
    <property type="project" value="UniProtKB-UniRule"/>
</dbReference>
<dbReference type="GO" id="GO:0043043">
    <property type="term" value="P:peptide biosynthetic process"/>
    <property type="evidence" value="ECO:0007669"/>
    <property type="project" value="InterPro"/>
</dbReference>
<dbReference type="CDD" id="cd04470">
    <property type="entry name" value="S1_EF-P_repeat_1"/>
    <property type="match status" value="1"/>
</dbReference>
<dbReference type="CDD" id="cd05794">
    <property type="entry name" value="S1_EF-P_repeat_2"/>
    <property type="match status" value="1"/>
</dbReference>
<dbReference type="FunFam" id="2.30.30.30:FF:000003">
    <property type="entry name" value="Elongation factor P"/>
    <property type="match status" value="1"/>
</dbReference>
<dbReference type="FunFam" id="2.40.50.140:FF:000004">
    <property type="entry name" value="Elongation factor P"/>
    <property type="match status" value="1"/>
</dbReference>
<dbReference type="FunFam" id="2.40.50.140:FF:000009">
    <property type="entry name" value="Elongation factor P"/>
    <property type="match status" value="1"/>
</dbReference>
<dbReference type="Gene3D" id="2.30.30.30">
    <property type="match status" value="1"/>
</dbReference>
<dbReference type="Gene3D" id="2.40.50.140">
    <property type="entry name" value="Nucleic acid-binding proteins"/>
    <property type="match status" value="2"/>
</dbReference>
<dbReference type="HAMAP" id="MF_00141">
    <property type="entry name" value="EF_P"/>
    <property type="match status" value="1"/>
</dbReference>
<dbReference type="InterPro" id="IPR015365">
    <property type="entry name" value="Elong-fact-P_C"/>
</dbReference>
<dbReference type="InterPro" id="IPR012340">
    <property type="entry name" value="NA-bd_OB-fold"/>
</dbReference>
<dbReference type="InterPro" id="IPR014722">
    <property type="entry name" value="Rib_uL2_dom2"/>
</dbReference>
<dbReference type="InterPro" id="IPR020599">
    <property type="entry name" value="Transl_elong_fac_P/YeiP"/>
</dbReference>
<dbReference type="InterPro" id="IPR013185">
    <property type="entry name" value="Transl_elong_KOW-like"/>
</dbReference>
<dbReference type="InterPro" id="IPR001059">
    <property type="entry name" value="Transl_elong_P/YeiP_cen"/>
</dbReference>
<dbReference type="InterPro" id="IPR013852">
    <property type="entry name" value="Transl_elong_P/YeiP_CS"/>
</dbReference>
<dbReference type="InterPro" id="IPR011768">
    <property type="entry name" value="Transl_elongation_fac_P"/>
</dbReference>
<dbReference type="InterPro" id="IPR008991">
    <property type="entry name" value="Translation_prot_SH3-like_sf"/>
</dbReference>
<dbReference type="NCBIfam" id="TIGR00038">
    <property type="entry name" value="efp"/>
    <property type="match status" value="1"/>
</dbReference>
<dbReference type="NCBIfam" id="NF001810">
    <property type="entry name" value="PRK00529.1"/>
    <property type="match status" value="1"/>
</dbReference>
<dbReference type="PANTHER" id="PTHR30053">
    <property type="entry name" value="ELONGATION FACTOR P"/>
    <property type="match status" value="1"/>
</dbReference>
<dbReference type="PANTHER" id="PTHR30053:SF12">
    <property type="entry name" value="ELONGATION FACTOR P (EF-P) FAMILY PROTEIN"/>
    <property type="match status" value="1"/>
</dbReference>
<dbReference type="Pfam" id="PF01132">
    <property type="entry name" value="EFP"/>
    <property type="match status" value="1"/>
</dbReference>
<dbReference type="Pfam" id="PF08207">
    <property type="entry name" value="EFP_N"/>
    <property type="match status" value="1"/>
</dbReference>
<dbReference type="Pfam" id="PF09285">
    <property type="entry name" value="Elong-fact-P_C"/>
    <property type="match status" value="1"/>
</dbReference>
<dbReference type="PIRSF" id="PIRSF005901">
    <property type="entry name" value="EF-P"/>
    <property type="match status" value="1"/>
</dbReference>
<dbReference type="SMART" id="SM01185">
    <property type="entry name" value="EFP"/>
    <property type="match status" value="1"/>
</dbReference>
<dbReference type="SMART" id="SM00841">
    <property type="entry name" value="Elong-fact-P_C"/>
    <property type="match status" value="1"/>
</dbReference>
<dbReference type="SUPFAM" id="SSF50249">
    <property type="entry name" value="Nucleic acid-binding proteins"/>
    <property type="match status" value="2"/>
</dbReference>
<dbReference type="SUPFAM" id="SSF50104">
    <property type="entry name" value="Translation proteins SH3-like domain"/>
    <property type="match status" value="1"/>
</dbReference>
<dbReference type="PROSITE" id="PS01275">
    <property type="entry name" value="EFP"/>
    <property type="match status" value="1"/>
</dbReference>
<organism>
    <name type="scientific">Francisella tularensis subsp. tularensis (strain SCHU S4 / Schu 4)</name>
    <dbReference type="NCBI Taxonomy" id="177416"/>
    <lineage>
        <taxon>Bacteria</taxon>
        <taxon>Pseudomonadati</taxon>
        <taxon>Pseudomonadota</taxon>
        <taxon>Gammaproteobacteria</taxon>
        <taxon>Thiotrichales</taxon>
        <taxon>Francisellaceae</taxon>
        <taxon>Francisella</taxon>
    </lineage>
</organism>
<keyword id="KW-0963">Cytoplasm</keyword>
<keyword id="KW-0251">Elongation factor</keyword>
<keyword id="KW-0379">Hydroxylation</keyword>
<keyword id="KW-0648">Protein biosynthesis</keyword>
<keyword id="KW-1185">Reference proteome</keyword>
<accession>Q5NI60</accession>
<sequence>MASYSTNEFKGGLKVLIDGNPMVIVENEFVKPGKGQAFNRVKLKNLLNDRVVEKTFKSGESVEAADVEELTTVYSYFDGDSYVFMHPETFEQYMVSEEALGETKKWLKDQDEYQVILFNGQPISIIAANFVNLEIIETDPGLKGDTAGTGGKPATLSTGAVVRVPLFVQTGEIIKVDTRTSTYVSRVKD</sequence>
<gene>
    <name evidence="1" type="primary">efp</name>
    <name type="ordered locus">FTT_0229c</name>
</gene>
<proteinExistence type="inferred from homology"/>
<protein>
    <recommendedName>
        <fullName evidence="1">Elongation factor P</fullName>
        <shortName evidence="1">EF-P</shortName>
    </recommendedName>
</protein>
<evidence type="ECO:0000255" key="1">
    <source>
        <dbReference type="HAMAP-Rule" id="MF_00141"/>
    </source>
</evidence>
<name>EFP_FRATT</name>